<comment type="function">
    <text evidence="1 2 3 4">Involved in the biosynthesis of isoprenoids. Catalyzes the 1,3-allylic rearrangement of the homoallylic substrate isopentenyl (IPP) to its allylic isomer, dimethylallyl diphosphate (DMAPP).</text>
</comment>
<comment type="catalytic activity">
    <reaction evidence="1 3">
        <text>isopentenyl diphosphate = dimethylallyl diphosphate</text>
        <dbReference type="Rhea" id="RHEA:23284"/>
        <dbReference type="ChEBI" id="CHEBI:57623"/>
        <dbReference type="ChEBI" id="CHEBI:128769"/>
        <dbReference type="EC" id="5.3.3.2"/>
    </reaction>
</comment>
<comment type="cofactor">
    <cofactor evidence="2 3 4">
        <name>FMN</name>
        <dbReference type="ChEBI" id="CHEBI:58210"/>
    </cofactor>
</comment>
<comment type="cofactor">
    <cofactor evidence="2">
        <name>NADPH</name>
        <dbReference type="ChEBI" id="CHEBI:57783"/>
    </cofactor>
</comment>
<comment type="cofactor">
    <cofactor evidence="2 3">
        <name>Mg(2+)</name>
        <dbReference type="ChEBI" id="CHEBI:18420"/>
    </cofactor>
</comment>
<comment type="biophysicochemical properties">
    <kinetics>
        <KM evidence="3">7.39 uM for IPP (at pH 6 and 60 degrees Celsius)</KM>
        <text>kcat is 29.9 sec(-1) for isomerase activity with IPP (at pH 6 and 60 degrees Celsius).</text>
    </kinetics>
</comment>
<comment type="subunit">
    <text evidence="1 2 3 4">Homooctamer. Dimer of tetramers.</text>
</comment>
<comment type="subcellular location">
    <subcellularLocation>
        <location evidence="1">Cytoplasm</location>
    </subcellularLocation>
</comment>
<comment type="similarity">
    <text evidence="1">Belongs to the IPP isomerase type 2 family.</text>
</comment>
<dbReference type="EC" id="5.3.3.2" evidence="1"/>
<dbReference type="EMBL" id="AB118244">
    <property type="protein sequence ID" value="BAC82424.1"/>
    <property type="molecule type" value="Genomic_DNA"/>
</dbReference>
<dbReference type="EMBL" id="CP077717">
    <property type="protein sequence ID" value="QXJ27321.1"/>
    <property type="molecule type" value="Genomic_DNA"/>
</dbReference>
<dbReference type="PDB" id="2ZRU">
    <property type="method" value="X-ray"/>
    <property type="resolution" value="2.00 A"/>
    <property type="chains" value="A/B/C/D=1-368"/>
</dbReference>
<dbReference type="PDB" id="2ZRV">
    <property type="method" value="X-ray"/>
    <property type="resolution" value="2.30 A"/>
    <property type="chains" value="A/B/C/D=1-368"/>
</dbReference>
<dbReference type="PDB" id="2ZRW">
    <property type="method" value="X-ray"/>
    <property type="resolution" value="2.40 A"/>
    <property type="chains" value="A/B/C/D=1-368"/>
</dbReference>
<dbReference type="PDB" id="2ZRX">
    <property type="method" value="X-ray"/>
    <property type="resolution" value="3.00 A"/>
    <property type="chains" value="A/B/C/D=1-368"/>
</dbReference>
<dbReference type="PDB" id="2ZRY">
    <property type="method" value="X-ray"/>
    <property type="resolution" value="2.64 A"/>
    <property type="chains" value="A/B/C/D=1-368"/>
</dbReference>
<dbReference type="PDB" id="2ZRZ">
    <property type="method" value="X-ray"/>
    <property type="resolution" value="2.90 A"/>
    <property type="chains" value="A/B/C/D=1-368"/>
</dbReference>
<dbReference type="PDB" id="3B03">
    <property type="method" value="X-ray"/>
    <property type="resolution" value="2.20 A"/>
    <property type="chains" value="A/B/C/D=1-368"/>
</dbReference>
<dbReference type="PDB" id="3B04">
    <property type="method" value="X-ray"/>
    <property type="resolution" value="2.30 A"/>
    <property type="chains" value="A/B/C/D=1-368"/>
</dbReference>
<dbReference type="PDB" id="3B05">
    <property type="method" value="X-ray"/>
    <property type="resolution" value="2.20 A"/>
    <property type="chains" value="A/B/C/D=1-368"/>
</dbReference>
<dbReference type="PDB" id="3B06">
    <property type="method" value="X-ray"/>
    <property type="resolution" value="2.29 A"/>
    <property type="chains" value="A/B/C/D=1-368"/>
</dbReference>
<dbReference type="PDB" id="3VKJ">
    <property type="method" value="X-ray"/>
    <property type="resolution" value="1.70 A"/>
    <property type="chains" value="A/B/C/D=1-368"/>
</dbReference>
<dbReference type="PDBsum" id="2ZRU"/>
<dbReference type="PDBsum" id="2ZRV"/>
<dbReference type="PDBsum" id="2ZRW"/>
<dbReference type="PDBsum" id="2ZRX"/>
<dbReference type="PDBsum" id="2ZRY"/>
<dbReference type="PDBsum" id="2ZRZ"/>
<dbReference type="PDBsum" id="3B03"/>
<dbReference type="PDBsum" id="3B04"/>
<dbReference type="PDBsum" id="3B05"/>
<dbReference type="PDBsum" id="3B06"/>
<dbReference type="PDBsum" id="3VKJ"/>
<dbReference type="SMR" id="P61615"/>
<dbReference type="KEGG" id="sshi:J5U23_00185"/>
<dbReference type="OrthoDB" id="371955at2157"/>
<dbReference type="BioCyc" id="MetaCyc:MONOMER-14625"/>
<dbReference type="BRENDA" id="5.3.3.2">
    <property type="organism ID" value="6162"/>
</dbReference>
<dbReference type="SABIO-RK" id="P61615"/>
<dbReference type="EvolutionaryTrace" id="P61615"/>
<dbReference type="Proteomes" id="UP000694018">
    <property type="component" value="Chromosome"/>
</dbReference>
<dbReference type="GO" id="GO:0005737">
    <property type="term" value="C:cytoplasm"/>
    <property type="evidence" value="ECO:0007669"/>
    <property type="project" value="UniProtKB-SubCell"/>
</dbReference>
<dbReference type="GO" id="GO:0010181">
    <property type="term" value="F:FMN binding"/>
    <property type="evidence" value="ECO:0000314"/>
    <property type="project" value="UniProtKB"/>
</dbReference>
<dbReference type="GO" id="GO:0004452">
    <property type="term" value="F:isopentenyl-diphosphate delta-isomerase activity"/>
    <property type="evidence" value="ECO:0000314"/>
    <property type="project" value="UniProtKB"/>
</dbReference>
<dbReference type="GO" id="GO:0000287">
    <property type="term" value="F:magnesium ion binding"/>
    <property type="evidence" value="ECO:0000314"/>
    <property type="project" value="UniProtKB"/>
</dbReference>
<dbReference type="GO" id="GO:0070402">
    <property type="term" value="F:NADPH binding"/>
    <property type="evidence" value="ECO:0000314"/>
    <property type="project" value="UniProtKB"/>
</dbReference>
<dbReference type="GO" id="GO:0016491">
    <property type="term" value="F:oxidoreductase activity"/>
    <property type="evidence" value="ECO:0007669"/>
    <property type="project" value="InterPro"/>
</dbReference>
<dbReference type="GO" id="GO:0008299">
    <property type="term" value="P:isoprenoid biosynthetic process"/>
    <property type="evidence" value="ECO:0007669"/>
    <property type="project" value="UniProtKB-UniRule"/>
</dbReference>
<dbReference type="CDD" id="cd02811">
    <property type="entry name" value="IDI-2_FMN"/>
    <property type="match status" value="1"/>
</dbReference>
<dbReference type="FunFam" id="3.20.20.70:FF:000258">
    <property type="entry name" value="Isopentenyl-diphosphate delta-isomerase"/>
    <property type="match status" value="1"/>
</dbReference>
<dbReference type="Gene3D" id="3.20.20.70">
    <property type="entry name" value="Aldolase class I"/>
    <property type="match status" value="1"/>
</dbReference>
<dbReference type="HAMAP" id="MF_00354">
    <property type="entry name" value="Idi_2"/>
    <property type="match status" value="1"/>
</dbReference>
<dbReference type="InterPro" id="IPR013785">
    <property type="entry name" value="Aldolase_TIM"/>
</dbReference>
<dbReference type="InterPro" id="IPR000262">
    <property type="entry name" value="FMN-dep_DH"/>
</dbReference>
<dbReference type="InterPro" id="IPR011179">
    <property type="entry name" value="IPdP_isomerase"/>
</dbReference>
<dbReference type="NCBIfam" id="TIGR02151">
    <property type="entry name" value="IPP_isom_2"/>
    <property type="match status" value="1"/>
</dbReference>
<dbReference type="PANTHER" id="PTHR43665">
    <property type="entry name" value="ISOPENTENYL-DIPHOSPHATE DELTA-ISOMERASE"/>
    <property type="match status" value="1"/>
</dbReference>
<dbReference type="PANTHER" id="PTHR43665:SF1">
    <property type="entry name" value="ISOPENTENYL-DIPHOSPHATE DELTA-ISOMERASE"/>
    <property type="match status" value="1"/>
</dbReference>
<dbReference type="Pfam" id="PF01070">
    <property type="entry name" value="FMN_dh"/>
    <property type="match status" value="1"/>
</dbReference>
<dbReference type="PIRSF" id="PIRSF003314">
    <property type="entry name" value="IPP_isomerase"/>
    <property type="match status" value="1"/>
</dbReference>
<dbReference type="SMART" id="SM01240">
    <property type="entry name" value="IMPDH"/>
    <property type="match status" value="1"/>
</dbReference>
<dbReference type="SUPFAM" id="SSF51395">
    <property type="entry name" value="FMN-linked oxidoreductases"/>
    <property type="match status" value="1"/>
</dbReference>
<keyword id="KW-0002">3D-structure</keyword>
<keyword id="KW-0963">Cytoplasm</keyword>
<keyword id="KW-0285">Flavoprotein</keyword>
<keyword id="KW-0288">FMN</keyword>
<keyword id="KW-0413">Isomerase</keyword>
<keyword id="KW-0414">Isoprene biosynthesis</keyword>
<keyword id="KW-0460">Magnesium</keyword>
<keyword id="KW-0479">Metal-binding</keyword>
<keyword id="KW-0521">NADP</keyword>
<accession>P61615</accession>
<accession>A0A8F5BL69</accession>
<name>IDI2_SACSH</name>
<evidence type="ECO:0000255" key="1">
    <source>
        <dbReference type="HAMAP-Rule" id="MF_00354"/>
    </source>
</evidence>
<evidence type="ECO:0000269" key="2">
    <source>
    </source>
</evidence>
<evidence type="ECO:0000269" key="3">
    <source>
    </source>
</evidence>
<evidence type="ECO:0000269" key="4">
    <source>
    </source>
</evidence>
<evidence type="ECO:0000312" key="5">
    <source>
        <dbReference type="EMBL" id="QXJ27321.1"/>
    </source>
</evidence>
<evidence type="ECO:0007829" key="6">
    <source>
        <dbReference type="PDB" id="3VKJ"/>
    </source>
</evidence>
<reference key="1">
    <citation type="journal article" date="2004" name="Eur. J. Biochem.">
        <title>Type 2 isopentenyl diphosphate isomerase from a thermoacidophilic archaeon Sulfolobus shibatae.</title>
        <authorList>
            <person name="Yamashita S."/>
            <person name="Hemmi H."/>
            <person name="Ikeda Y."/>
            <person name="Nakayama T."/>
            <person name="Nishino T."/>
        </authorList>
    </citation>
    <scope>NUCLEOTIDE SEQUENCE [GENOMIC DNA]</scope>
</reference>
<reference evidence="5" key="2">
    <citation type="journal article" date="2021" name="Environ. Microbiol.">
        <title>New insights into the diversity and evolution of the archaeal mobilome from three complete genomes of Saccharolobus shibatae.</title>
        <authorList>
            <person name="Medvedeva S."/>
            <person name="Brandt D."/>
            <person name="Cvirkaite-Krupovic V."/>
            <person name="Liu Y."/>
            <person name="Severinov K."/>
            <person name="Ishino S."/>
            <person name="Ishino Y."/>
            <person name="Prangishvili D."/>
            <person name="Kalinowski J."/>
            <person name="Krupovic M."/>
        </authorList>
    </citation>
    <scope>NUCLEOTIDE SEQUENCE [LARGE SCALE GENOMIC DNA]</scope>
    <source>
        <strain>ATCC 51178 / DSM 5389 / JCM 8931 / NBRC 15437 / B12</strain>
    </source>
</reference>
<reference key="3">
    <citation type="journal article" date="2009" name="J. Biol. Chem.">
        <title>New role of flavin as a general acid-base catalyst with no redox function in type 2 isopentenyl-diphosphate isomerase.</title>
        <authorList>
            <person name="Unno H."/>
            <person name="Yamashita S."/>
            <person name="Ikeda Y."/>
            <person name="Sekiguchi S.Y."/>
            <person name="Yoshida N."/>
            <person name="Yoshimura T."/>
            <person name="Kusunoki M."/>
            <person name="Nakayama T."/>
            <person name="Nishino T."/>
            <person name="Hemmi H."/>
        </authorList>
    </citation>
    <scope>X-RAY CRYSTALLOGRAPHY (2.00 ANGSTROMS) IN COMPLEX WITH FMN; SUBSTRATE ANALOGS AND MAGNESIUM</scope>
    <scope>FUNCTION</scope>
    <scope>MUTAGENESIS OF ARG-7; LYS-8; HIS-11; THR-68; SER-96; ASN-125; HIS-155; ASN-157; GLN-160; GLU-161; LYS-193; GLU-194; ASP-216; GLU-229 AND ARG-232</scope>
    <scope>COFACTOR</scope>
    <scope>SUBUNIT</scope>
</reference>
<reference key="4">
    <citation type="journal article" date="2011" name="Proc. Natl. Acad. Sci. U.S.A.">
        <title>Covalent modification of reduced flavin mononucleotide in type-2 isopentenyl diphosphate isomerase by active-site-directed inhibitors.</title>
        <authorList>
            <person name="Nagai T."/>
            <person name="Unno H."/>
            <person name="Janczak M.W."/>
            <person name="Yoshimura T."/>
            <person name="Poulter C.D."/>
            <person name="Hemmi H."/>
        </authorList>
    </citation>
    <scope>X-RAY CRYSTALLOGRAPHY (2.20 ANGSTROMS) IN COMPLEX WITH FMN; SUBSTRATE ANALOGS AND MAGNESIUM</scope>
    <scope>FUNCTION</scope>
    <scope>CATALYTIC ACTIVITY</scope>
    <scope>MUTAGENESIS OF GLN-160</scope>
    <scope>BIOPHYSICOCHEMICAL PROPERTIES</scope>
    <scope>COFACTOR</scope>
    <scope>SUBUNIT</scope>
</reference>
<reference key="5">
    <citation type="journal article" date="2012" name="J. Bacteriol.">
        <title>Substrate-induced change in the quaternary structure of type 2 isopentenyl diphosphate isomerase from Sulfolobus shibatae.</title>
        <authorList>
            <person name="Nakatani H."/>
            <person name="Goda S."/>
            <person name="Unno H."/>
            <person name="Nagai T."/>
            <person name="Yoshimura T."/>
            <person name="Hemmi H."/>
        </authorList>
    </citation>
    <scope>X-RAY CRYSTALLOGRAPHY (1.70 ANGSTROMS) IN COMPLEX WITH FMN ANALOG</scope>
    <scope>FUNCTION</scope>
    <scope>MUTAGENESIS OF GLU-13 AND ARG-235</scope>
    <scope>COFACTOR</scope>
    <scope>SUBUNIT</scope>
</reference>
<organism>
    <name type="scientific">Saccharolobus shibatae (strain ATCC 51178 / DSM 5389 / JCM 8931 / NBRC 15437 / B12)</name>
    <name type="common">Sulfolobus shibatae</name>
    <dbReference type="NCBI Taxonomy" id="523848"/>
    <lineage>
        <taxon>Archaea</taxon>
        <taxon>Thermoproteota</taxon>
        <taxon>Thermoprotei</taxon>
        <taxon>Sulfolobales</taxon>
        <taxon>Sulfolobaceae</taxon>
        <taxon>Saccharolobus</taxon>
    </lineage>
</organism>
<gene>
    <name evidence="1" type="primary">fni</name>
    <name type="synonym">idi</name>
    <name evidence="5" type="ORF">J5U23_00185</name>
</gene>
<sequence length="368" mass="40427">MPDIVNRKVEHVEIAAFENVDGLSSSTFLNDVILVHQGFPGISFSEINTKTKFFRKEISVPVMVTGMTGGRNELGRINKIIAEVAEKFGIPMGVGSQRVAIEKAEARESFAIVRKVAPTIPIIANLGMPQLVKGYGLKEFQDAIQMIEADAIAVHLNPAQEVFQPEGEPEYQIYALEKLRDISKELSVPIIVKESGNGISMETAKLLYSYGIKNFDTSGQGGTNWIAIEMIRDIRRGNWKAESAKNFLDWGVPTAASIMEVRYSVPDSFLVGSGGIRSGLDAAKAIALGADIAGMALPVLKSAIEGKESLEQFFRKIIFELKAAMMLTGSKDVDALKKTSIVILGKLKEWAEYRGINLSIYEKVRKRE</sequence>
<protein>
    <recommendedName>
        <fullName evidence="1">Isopentenyl-diphosphate delta-isomerase</fullName>
        <shortName evidence="1">IPP isomerase</shortName>
        <ecNumber evidence="1">5.3.3.2</ecNumber>
    </recommendedName>
    <alternativeName>
        <fullName evidence="1">Isopentenyl diphosphate:dimethylallyl diphosphate isomerase</fullName>
    </alternativeName>
    <alternativeName>
        <fullName evidence="1">Isopentenyl pyrophosphate isomerase</fullName>
    </alternativeName>
    <alternativeName>
        <fullName evidence="1">Type 2 isopentenyl diphosphate isomerase</fullName>
        <shortName evidence="1">IDI-2</shortName>
    </alternativeName>
</protein>
<proteinExistence type="evidence at protein level"/>
<feature type="chain" id="PRO_0000134454" description="Isopentenyl-diphosphate delta-isomerase">
    <location>
        <begin position="1"/>
        <end position="368"/>
    </location>
</feature>
<feature type="binding site">
    <location>
        <begin position="7"/>
        <end position="8"/>
    </location>
    <ligand>
        <name>substrate</name>
    </ligand>
</feature>
<feature type="binding site" evidence="1 2 3">
    <location>
        <position position="65"/>
    </location>
    <ligand>
        <name>FMN</name>
        <dbReference type="ChEBI" id="CHEBI:58210"/>
    </ligand>
</feature>
<feature type="binding site" evidence="1 2 3">
    <location>
        <begin position="66"/>
        <end position="68"/>
    </location>
    <ligand>
        <name>FMN</name>
        <dbReference type="ChEBI" id="CHEBI:58210"/>
    </ligand>
</feature>
<feature type="binding site">
    <location>
        <begin position="96"/>
        <end position="98"/>
    </location>
    <ligand>
        <name>substrate</name>
    </ligand>
</feature>
<feature type="binding site" evidence="1 2 3">
    <location>
        <position position="96"/>
    </location>
    <ligand>
        <name>FMN</name>
        <dbReference type="ChEBI" id="CHEBI:58210"/>
    </ligand>
</feature>
<feature type="binding site" evidence="1 2 3">
    <location>
        <position position="125"/>
    </location>
    <ligand>
        <name>FMN</name>
        <dbReference type="ChEBI" id="CHEBI:58210"/>
    </ligand>
</feature>
<feature type="binding site">
    <location>
        <position position="160"/>
    </location>
    <ligand>
        <name>substrate</name>
    </ligand>
</feature>
<feature type="binding site" evidence="1 2 3">
    <location>
        <position position="161"/>
    </location>
    <ligand>
        <name>Mg(2+)</name>
        <dbReference type="ChEBI" id="CHEBI:18420"/>
    </ligand>
</feature>
<feature type="binding site" evidence="1 2 3">
    <location>
        <position position="193"/>
    </location>
    <ligand>
        <name>FMN</name>
        <dbReference type="ChEBI" id="CHEBI:58210"/>
    </ligand>
</feature>
<feature type="binding site" evidence="1 2 3">
    <location>
        <position position="218"/>
    </location>
    <ligand>
        <name>FMN</name>
        <dbReference type="ChEBI" id="CHEBI:58210"/>
    </ligand>
</feature>
<feature type="binding site" evidence="1 2 3">
    <location>
        <position position="223"/>
    </location>
    <ligand>
        <name>FMN</name>
        <dbReference type="ChEBI" id="CHEBI:58210"/>
    </ligand>
</feature>
<feature type="binding site" evidence="1 2 3">
    <location>
        <begin position="275"/>
        <end position="277"/>
    </location>
    <ligand>
        <name>FMN</name>
        <dbReference type="ChEBI" id="CHEBI:58210"/>
    </ligand>
</feature>
<feature type="binding site" evidence="1 2 3">
    <location>
        <begin position="296"/>
        <end position="297"/>
    </location>
    <ligand>
        <name>FMN</name>
        <dbReference type="ChEBI" id="CHEBI:58210"/>
    </ligand>
</feature>
<feature type="mutagenesis site" description="Does not affect the proper folding of the enzyme, but it shows significant loss of isomerase activity." evidence="2">
    <original>R</original>
    <variation>A</variation>
    <location>
        <position position="7"/>
    </location>
</feature>
<feature type="mutagenesis site" description="Does not affect the proper folding of the enzyme, but it shows significant loss of isomerase activity." evidence="2">
    <original>K</original>
    <variation>A</variation>
    <location>
        <position position="8"/>
    </location>
</feature>
<feature type="mutagenesis site" description="Does not affect the proper folding of the enzyme, but it shows significant reduction of isomerase activity." evidence="2">
    <original>H</original>
    <variation>A</variation>
    <location>
        <position position="11"/>
    </location>
</feature>
<feature type="mutagenesis site" description="This mutant is heat stable and its affinity binding for IPP is smaller than that of the wild-type. It is in the tetrameric state even at a concentration where the wild-type enzyme dominantly formed an octamer; when associated with E-235." evidence="4">
    <original>E</original>
    <variation>R</variation>
    <location>
        <position position="13"/>
    </location>
</feature>
<feature type="mutagenesis site" description="Does not affect the proper folding of the enzyme, but it shows significant reduction of isomerase activity." evidence="2">
    <original>T</original>
    <variation>A</variation>
    <location>
        <position position="68"/>
    </location>
</feature>
<feature type="mutagenesis site" description="Does not affect the proper folding of the enzyme, but it shows significant reduction of isomerase activity." evidence="2">
    <original>S</original>
    <variation>A</variation>
    <location>
        <position position="96"/>
    </location>
</feature>
<feature type="mutagenesis site" description="Does not affect the proper folding of the enzyme, but it shows significant reduction of isomerase activity." evidence="2">
    <original>N</original>
    <variation>A</variation>
    <location>
        <position position="125"/>
    </location>
</feature>
<feature type="mutagenesis site" description="Does not affect the proper folding of the enzyme, but it shows significant reduction of isomerase activity." evidence="2">
    <original>H</original>
    <variation>A</variation>
    <location>
        <position position="155"/>
    </location>
</feature>
<feature type="mutagenesis site" description="Does not affect the proper folding of the enzyme, but it shows significant loss of isomerase activity." evidence="2">
    <original>N</original>
    <variation>A</variation>
    <location>
        <position position="157"/>
    </location>
</feature>
<feature type="mutagenesis site" description="Does not affect the proper folding of the enzyme, but it shows significant loss of isomerase activity." evidence="2 3">
    <original>Q</original>
    <variation>A</variation>
    <location>
        <position position="160"/>
    </location>
</feature>
<feature type="mutagenesis site" description="10-fold decrease in the catalytic efficiency." evidence="2 3">
    <original>Q</original>
    <variation>E</variation>
    <location>
        <position position="160"/>
    </location>
</feature>
<feature type="mutagenesis site" description="23-fold decrease in the catalytic efficiency." evidence="2 3">
    <original>Q</original>
    <variation>H</variation>
    <location>
        <position position="160"/>
    </location>
</feature>
<feature type="mutagenesis site" description="28-fold decrease in the catalytic efficiency and 5-fold decrease in the affinity binding for IPP." evidence="2 3">
    <original>Q</original>
    <variation>L</variation>
    <location>
        <position position="160"/>
    </location>
</feature>
<feature type="mutagenesis site" description="150-fold decrease in the catalytic efficiency and 2-fold decrease in the affinity binding for IPP." evidence="2 3">
    <original>Q</original>
    <variation>N</variation>
    <location>
        <position position="160"/>
    </location>
</feature>
<feature type="mutagenesis site" description="Does not affect the proper folding of the enzyme, but it shows significant loss of isomerase activity." evidence="2">
    <original>E</original>
    <variation>A</variation>
    <location>
        <position position="161"/>
    </location>
</feature>
<feature type="mutagenesis site" description="Shows significant loss of isomerase activity. Binds FMN with very low affinity, but the global structure of the mutant has not been altered by the mutation." evidence="2">
    <original>K</original>
    <variation>A</variation>
    <location>
        <position position="193"/>
    </location>
</feature>
<feature type="mutagenesis site" description="Does not affect the proper folding of the enzyme, but it shows significant reduction of isomerase activity." evidence="2">
    <original>E</original>
    <variation>A</variation>
    <location>
        <position position="194"/>
    </location>
</feature>
<feature type="mutagenesis site" description="Does not affect the proper folding of the enzyme, but it shows significant reduction of isomerase activity." evidence="2">
    <original>D</original>
    <variation>A</variation>
    <location>
        <position position="216"/>
    </location>
</feature>
<feature type="mutagenesis site" description="Does not affect the proper folding of the enzyme, but it shows significant reduction of isomerase activity." evidence="2">
    <original>E</original>
    <variation>A</variation>
    <location>
        <position position="229"/>
    </location>
</feature>
<feature type="mutagenesis site" description="Does not affect the proper folding of the enzyme, but it shows significant reduction of isomerase activity." evidence="2">
    <original>R</original>
    <variation>A</variation>
    <location>
        <position position="232"/>
    </location>
</feature>
<feature type="mutagenesis site" description="This mutant is heat stable and its affinity binding for IPP is smaller than that of the wild-type. It is in the tetrameric state even at a concentration where the wild-type enzyme dominantly formed an octamer; when associated with R-13." evidence="4">
    <original>R</original>
    <variation>E</variation>
    <location>
        <position position="235"/>
    </location>
</feature>
<feature type="helix" evidence="6">
    <location>
        <begin position="10"/>
        <end position="17"/>
    </location>
</feature>
<feature type="helix" evidence="6">
    <location>
        <begin position="29"/>
        <end position="31"/>
    </location>
</feature>
<feature type="strand" evidence="6">
    <location>
        <begin position="32"/>
        <end position="34"/>
    </location>
</feature>
<feature type="strand" evidence="6">
    <location>
        <begin position="41"/>
        <end position="43"/>
    </location>
</feature>
<feature type="helix" evidence="6">
    <location>
        <begin position="44"/>
        <end position="46"/>
    </location>
</feature>
<feature type="strand" evidence="6">
    <location>
        <begin position="51"/>
        <end position="53"/>
    </location>
</feature>
<feature type="strand" evidence="6">
    <location>
        <begin position="56"/>
        <end position="64"/>
    </location>
</feature>
<feature type="helix" evidence="6">
    <location>
        <begin position="72"/>
        <end position="88"/>
    </location>
</feature>
<feature type="helix" evidence="6">
    <location>
        <begin position="98"/>
        <end position="102"/>
    </location>
</feature>
<feature type="helix" evidence="6">
    <location>
        <begin position="104"/>
        <end position="106"/>
    </location>
</feature>
<feature type="helix" evidence="6">
    <location>
        <begin position="108"/>
        <end position="116"/>
    </location>
</feature>
<feature type="strand" evidence="6">
    <location>
        <begin position="118"/>
        <end position="120"/>
    </location>
</feature>
<feature type="strand" evidence="6">
    <location>
        <begin position="122"/>
        <end position="127"/>
    </location>
</feature>
<feature type="helix" evidence="6">
    <location>
        <begin position="128"/>
        <end position="132"/>
    </location>
</feature>
<feature type="helix" evidence="6">
    <location>
        <begin position="137"/>
        <end position="146"/>
    </location>
</feature>
<feature type="strand" evidence="6">
    <location>
        <begin position="150"/>
        <end position="155"/>
    </location>
</feature>
<feature type="helix" evidence="6">
    <location>
        <begin position="158"/>
        <end position="163"/>
    </location>
</feature>
<feature type="strand" evidence="6">
    <location>
        <begin position="164"/>
        <end position="166"/>
    </location>
</feature>
<feature type="helix" evidence="6">
    <location>
        <begin position="174"/>
        <end position="183"/>
    </location>
</feature>
<feature type="strand" evidence="6">
    <location>
        <begin position="190"/>
        <end position="193"/>
    </location>
</feature>
<feature type="strand" evidence="6">
    <location>
        <begin position="195"/>
        <end position="197"/>
    </location>
</feature>
<feature type="helix" evidence="6">
    <location>
        <begin position="201"/>
        <end position="209"/>
    </location>
</feature>
<feature type="strand" evidence="6">
    <location>
        <begin position="214"/>
        <end position="216"/>
    </location>
</feature>
<feature type="helix" evidence="6">
    <location>
        <begin position="225"/>
        <end position="235"/>
    </location>
</feature>
<feature type="helix" evidence="6">
    <location>
        <begin position="240"/>
        <end position="246"/>
    </location>
</feature>
<feature type="turn" evidence="6">
    <location>
        <begin position="247"/>
        <end position="249"/>
    </location>
</feature>
<feature type="helix" evidence="6">
    <location>
        <begin position="254"/>
        <end position="264"/>
    </location>
</feature>
<feature type="strand" evidence="6">
    <location>
        <begin position="269"/>
        <end position="275"/>
    </location>
</feature>
<feature type="helix" evidence="6">
    <location>
        <begin position="279"/>
        <end position="288"/>
    </location>
</feature>
<feature type="strand" evidence="6">
    <location>
        <begin position="291"/>
        <end position="295"/>
    </location>
</feature>
<feature type="helix" evidence="6">
    <location>
        <begin position="297"/>
        <end position="305"/>
    </location>
</feature>
<feature type="helix" evidence="6">
    <location>
        <begin position="307"/>
        <end position="327"/>
    </location>
</feature>
<feature type="helix" evidence="6">
    <location>
        <begin position="333"/>
        <end position="337"/>
    </location>
</feature>
<feature type="strand" evidence="6">
    <location>
        <begin position="341"/>
        <end position="343"/>
    </location>
</feature>
<feature type="helix" evidence="6">
    <location>
        <begin position="345"/>
        <end position="354"/>
    </location>
</feature>
<feature type="helix" evidence="6">
    <location>
        <begin position="358"/>
        <end position="365"/>
    </location>
</feature>